<evidence type="ECO:0000255" key="1">
    <source>
        <dbReference type="HAMAP-Rule" id="MF_01252"/>
    </source>
</evidence>
<evidence type="ECO:0000255" key="2">
    <source>
        <dbReference type="PROSITE-ProRule" id="PRU00238"/>
    </source>
</evidence>
<protein>
    <recommendedName>
        <fullName evidence="1">Flavohemoprotein</fullName>
    </recommendedName>
    <alternativeName>
        <fullName evidence="1">Flavohemoglobin</fullName>
    </alternativeName>
    <alternativeName>
        <fullName evidence="1">Hemoglobin-like protein</fullName>
    </alternativeName>
    <alternativeName>
        <fullName evidence="1">Nitric oxide dioxygenase</fullName>
        <shortName evidence="1">NO oxygenase</shortName>
        <shortName evidence="1">NOD</shortName>
        <ecNumber evidence="1">1.14.12.17</ecNumber>
    </alternativeName>
</protein>
<name>HMP_BACC1</name>
<comment type="function">
    <text evidence="1">Is involved in NO detoxification in an aerobic process, termed nitric oxide dioxygenase (NOD) reaction that utilizes O(2) and NAD(P)H to convert NO to nitrate, which protects the bacterium from various noxious nitrogen compounds. Therefore, plays a central role in the inducible response to nitrosative stress.</text>
</comment>
<comment type="catalytic activity">
    <reaction evidence="1">
        <text>2 nitric oxide + NADPH + 2 O2 = 2 nitrate + NADP(+) + H(+)</text>
        <dbReference type="Rhea" id="RHEA:19465"/>
        <dbReference type="ChEBI" id="CHEBI:15378"/>
        <dbReference type="ChEBI" id="CHEBI:15379"/>
        <dbReference type="ChEBI" id="CHEBI:16480"/>
        <dbReference type="ChEBI" id="CHEBI:17632"/>
        <dbReference type="ChEBI" id="CHEBI:57783"/>
        <dbReference type="ChEBI" id="CHEBI:58349"/>
        <dbReference type="EC" id="1.14.12.17"/>
    </reaction>
</comment>
<comment type="catalytic activity">
    <reaction evidence="1">
        <text>2 nitric oxide + NADH + 2 O2 = 2 nitrate + NAD(+) + H(+)</text>
        <dbReference type="Rhea" id="RHEA:19469"/>
        <dbReference type="ChEBI" id="CHEBI:15378"/>
        <dbReference type="ChEBI" id="CHEBI:15379"/>
        <dbReference type="ChEBI" id="CHEBI:16480"/>
        <dbReference type="ChEBI" id="CHEBI:17632"/>
        <dbReference type="ChEBI" id="CHEBI:57540"/>
        <dbReference type="ChEBI" id="CHEBI:57945"/>
        <dbReference type="EC" id="1.14.12.17"/>
    </reaction>
</comment>
<comment type="cofactor">
    <cofactor evidence="1">
        <name>heme b</name>
        <dbReference type="ChEBI" id="CHEBI:60344"/>
    </cofactor>
    <text evidence="1">Binds 1 heme b (iron(II)-protoporphyrin IX) group per subunit.</text>
</comment>
<comment type="cofactor">
    <cofactor evidence="1">
        <name>FAD</name>
        <dbReference type="ChEBI" id="CHEBI:57692"/>
    </cofactor>
    <text evidence="1">Binds 1 FAD per subunit.</text>
</comment>
<comment type="domain">
    <text>Consists of two distinct domains; an N-terminal heme-containing oxygen-binding domain and a C-terminal reductase domain with binding sites for FAD and NAD(P)H.</text>
</comment>
<comment type="similarity">
    <text evidence="1">Belongs to the globin family. Two-domain flavohemoproteins subfamily.</text>
</comment>
<comment type="similarity">
    <text evidence="1">In the C-terminal section; belongs to the flavoprotein pyridine nucleotide cytochrome reductase family.</text>
</comment>
<sequence length="402" mass="44954">MLSEKTIEIVKSTVPLLQEKGVEITTRFYEILFSEHPELLNIFNHTNQKKGRQQQALANAVYAAATYIDNLEVIIPVVKQIGHKHRSLGIKAEHYPIVGTCLLRAIKEVAGAPDEVLNAWGEAYGVIADAFISIEAEMYEEAAHKEGGWKDFRNFVVVKKVKESDVITSFYLKPEDGGKVSSFIPGQYVTVQINIEGETYTHNRQYSLSDAPGKEYYRISVKKEKGVDTPDGKVSNYLHDHVKEGDMLPVSAPAGDFVLNMDSTLPVVLISGGVGITPMMSMLNTLIEQDSKRNVCFVHAALNSNTHAMKEHVEALDNEYEQVKAYTCYSAPTEKDLEMKNFDKEGLIEAEWLQTIIPTTEAEFYFCGPVAFMKHINATLTDLGVKQEHIHYEFFGPAASLQ</sequence>
<feature type="chain" id="PRO_0000052420" description="Flavohemoprotein">
    <location>
        <begin position="1"/>
        <end position="402"/>
    </location>
</feature>
<feature type="domain" description="Globin" evidence="2">
    <location>
        <begin position="1"/>
        <end position="136"/>
    </location>
</feature>
<feature type="domain" description="FAD-binding FR-type" evidence="1">
    <location>
        <begin position="150"/>
        <end position="260"/>
    </location>
</feature>
<feature type="region of interest" description="Reductase">
    <location>
        <begin position="147"/>
        <end position="402"/>
    </location>
</feature>
<feature type="active site" description="Charge relay system" evidence="1">
    <location>
        <position position="95"/>
    </location>
</feature>
<feature type="active site" description="Charge relay system" evidence="1">
    <location>
        <position position="135"/>
    </location>
</feature>
<feature type="binding site" description="proximal binding residue" evidence="1">
    <location>
        <position position="85"/>
    </location>
    <ligand>
        <name>heme b</name>
        <dbReference type="ChEBI" id="CHEBI:60344"/>
    </ligand>
    <ligandPart>
        <name>Fe</name>
        <dbReference type="ChEBI" id="CHEBI:18248"/>
    </ligandPart>
</feature>
<feature type="binding site" evidence="1">
    <location>
        <position position="188"/>
    </location>
    <ligand>
        <name>FAD</name>
        <dbReference type="ChEBI" id="CHEBI:57692"/>
    </ligand>
</feature>
<feature type="binding site" evidence="1">
    <location>
        <begin position="204"/>
        <end position="207"/>
    </location>
    <ligand>
        <name>FAD</name>
        <dbReference type="ChEBI" id="CHEBI:57692"/>
    </ligand>
</feature>
<feature type="binding site" evidence="1">
    <location>
        <begin position="273"/>
        <end position="278"/>
    </location>
    <ligand>
        <name>NADP(+)</name>
        <dbReference type="ChEBI" id="CHEBI:58349"/>
    </ligand>
</feature>
<feature type="binding site" evidence="1">
    <location>
        <begin position="394"/>
        <end position="397"/>
    </location>
    <ligand>
        <name>FAD</name>
        <dbReference type="ChEBI" id="CHEBI:57692"/>
    </ligand>
</feature>
<feature type="site" description="Involved in heme-bound ligand stabilization and O-O bond activation" evidence="1">
    <location>
        <position position="29"/>
    </location>
</feature>
<feature type="site" description="Influences the redox potential of the prosthetic heme and FAD groups" evidence="1">
    <location>
        <position position="84"/>
    </location>
</feature>
<feature type="site" description="Influences the redox potential of the prosthetic heme and FAD groups" evidence="1">
    <location>
        <position position="393"/>
    </location>
</feature>
<gene>
    <name evidence="1" type="primary">hmp</name>
    <name type="ordered locus">BCE_1571</name>
</gene>
<accession>Q73B49</accession>
<organism>
    <name type="scientific">Bacillus cereus (strain ATCC 10987 / NRS 248)</name>
    <dbReference type="NCBI Taxonomy" id="222523"/>
    <lineage>
        <taxon>Bacteria</taxon>
        <taxon>Bacillati</taxon>
        <taxon>Bacillota</taxon>
        <taxon>Bacilli</taxon>
        <taxon>Bacillales</taxon>
        <taxon>Bacillaceae</taxon>
        <taxon>Bacillus</taxon>
        <taxon>Bacillus cereus group</taxon>
    </lineage>
</organism>
<reference key="1">
    <citation type="journal article" date="2004" name="Nucleic Acids Res.">
        <title>The genome sequence of Bacillus cereus ATCC 10987 reveals metabolic adaptations and a large plasmid related to Bacillus anthracis pXO1.</title>
        <authorList>
            <person name="Rasko D.A."/>
            <person name="Ravel J."/>
            <person name="Oekstad O.A."/>
            <person name="Helgason E."/>
            <person name="Cer R.Z."/>
            <person name="Jiang L."/>
            <person name="Shores K.A."/>
            <person name="Fouts D.E."/>
            <person name="Tourasse N.J."/>
            <person name="Angiuoli S.V."/>
            <person name="Kolonay J.F."/>
            <person name="Nelson W.C."/>
            <person name="Kolstoe A.-B."/>
            <person name="Fraser C.M."/>
            <person name="Read T.D."/>
        </authorList>
    </citation>
    <scope>NUCLEOTIDE SEQUENCE [LARGE SCALE GENOMIC DNA]</scope>
    <source>
        <strain>ATCC 10987 / NRS 248</strain>
    </source>
</reference>
<dbReference type="EC" id="1.14.12.17" evidence="1"/>
<dbReference type="EMBL" id="AE017194">
    <property type="protein sequence ID" value="AAS40500.1"/>
    <property type="molecule type" value="Genomic_DNA"/>
</dbReference>
<dbReference type="SMR" id="Q73B49"/>
<dbReference type="KEGG" id="bca:BCE_1571"/>
<dbReference type="HOGENOM" id="CLU_003827_12_0_9"/>
<dbReference type="Proteomes" id="UP000002527">
    <property type="component" value="Chromosome"/>
</dbReference>
<dbReference type="GO" id="GO:0071949">
    <property type="term" value="F:FAD binding"/>
    <property type="evidence" value="ECO:0007669"/>
    <property type="project" value="InterPro"/>
</dbReference>
<dbReference type="GO" id="GO:0020037">
    <property type="term" value="F:heme binding"/>
    <property type="evidence" value="ECO:0007669"/>
    <property type="project" value="InterPro"/>
</dbReference>
<dbReference type="GO" id="GO:0046872">
    <property type="term" value="F:metal ion binding"/>
    <property type="evidence" value="ECO:0007669"/>
    <property type="project" value="UniProtKB-KW"/>
</dbReference>
<dbReference type="GO" id="GO:0008941">
    <property type="term" value="F:nitric oxide dioxygenase NAD(P)H activity"/>
    <property type="evidence" value="ECO:0007669"/>
    <property type="project" value="UniProtKB-UniRule"/>
</dbReference>
<dbReference type="GO" id="GO:0019825">
    <property type="term" value="F:oxygen binding"/>
    <property type="evidence" value="ECO:0007669"/>
    <property type="project" value="InterPro"/>
</dbReference>
<dbReference type="GO" id="GO:0005344">
    <property type="term" value="F:oxygen carrier activity"/>
    <property type="evidence" value="ECO:0007669"/>
    <property type="project" value="UniProtKB-UniRule"/>
</dbReference>
<dbReference type="GO" id="GO:0071500">
    <property type="term" value="P:cellular response to nitrosative stress"/>
    <property type="evidence" value="ECO:0007669"/>
    <property type="project" value="TreeGrafter"/>
</dbReference>
<dbReference type="GO" id="GO:0046210">
    <property type="term" value="P:nitric oxide catabolic process"/>
    <property type="evidence" value="ECO:0007669"/>
    <property type="project" value="TreeGrafter"/>
</dbReference>
<dbReference type="GO" id="GO:0009636">
    <property type="term" value="P:response to toxic substance"/>
    <property type="evidence" value="ECO:0007669"/>
    <property type="project" value="UniProtKB-KW"/>
</dbReference>
<dbReference type="CDD" id="cd06184">
    <property type="entry name" value="flavohem_like_fad_nad_binding"/>
    <property type="match status" value="1"/>
</dbReference>
<dbReference type="CDD" id="cd14777">
    <property type="entry name" value="Yhb1-globin-like"/>
    <property type="match status" value="1"/>
</dbReference>
<dbReference type="FunFam" id="1.10.490.10:FF:000003">
    <property type="entry name" value="Flavohemoprotein"/>
    <property type="match status" value="1"/>
</dbReference>
<dbReference type="FunFam" id="2.40.30.10:FF:000034">
    <property type="entry name" value="Flavohemoprotein"/>
    <property type="match status" value="1"/>
</dbReference>
<dbReference type="FunFam" id="3.40.50.80:FF:000010">
    <property type="entry name" value="Flavohemoprotein"/>
    <property type="match status" value="1"/>
</dbReference>
<dbReference type="Gene3D" id="1.10.490.10">
    <property type="entry name" value="Globins"/>
    <property type="match status" value="1"/>
</dbReference>
<dbReference type="Gene3D" id="3.40.50.80">
    <property type="entry name" value="Nucleotide-binding domain of ferredoxin-NADP reductase (FNR) module"/>
    <property type="match status" value="1"/>
</dbReference>
<dbReference type="Gene3D" id="2.40.30.10">
    <property type="entry name" value="Translation factors"/>
    <property type="match status" value="1"/>
</dbReference>
<dbReference type="HAMAP" id="MF_01252">
    <property type="entry name" value="Hmp"/>
    <property type="match status" value="1"/>
</dbReference>
<dbReference type="InterPro" id="IPR008333">
    <property type="entry name" value="Cbr1-like_FAD-bd_dom"/>
</dbReference>
<dbReference type="InterPro" id="IPR017927">
    <property type="entry name" value="FAD-bd_FR_type"/>
</dbReference>
<dbReference type="InterPro" id="IPR039261">
    <property type="entry name" value="FNR_nucleotide-bd"/>
</dbReference>
<dbReference type="InterPro" id="IPR000971">
    <property type="entry name" value="Globin"/>
</dbReference>
<dbReference type="InterPro" id="IPR009050">
    <property type="entry name" value="Globin-like_sf"/>
</dbReference>
<dbReference type="InterPro" id="IPR012292">
    <property type="entry name" value="Globin/Proto"/>
</dbReference>
<dbReference type="InterPro" id="IPR023950">
    <property type="entry name" value="Hmp"/>
</dbReference>
<dbReference type="InterPro" id="IPR001433">
    <property type="entry name" value="OxRdtase_FAD/NAD-bd"/>
</dbReference>
<dbReference type="InterPro" id="IPR017938">
    <property type="entry name" value="Riboflavin_synthase-like_b-brl"/>
</dbReference>
<dbReference type="NCBIfam" id="NF009805">
    <property type="entry name" value="PRK13289.1"/>
    <property type="match status" value="1"/>
</dbReference>
<dbReference type="PANTHER" id="PTHR43396">
    <property type="entry name" value="FLAVOHEMOPROTEIN"/>
    <property type="match status" value="1"/>
</dbReference>
<dbReference type="PANTHER" id="PTHR43396:SF3">
    <property type="entry name" value="FLAVOHEMOPROTEIN"/>
    <property type="match status" value="1"/>
</dbReference>
<dbReference type="Pfam" id="PF00970">
    <property type="entry name" value="FAD_binding_6"/>
    <property type="match status" value="1"/>
</dbReference>
<dbReference type="Pfam" id="PF00042">
    <property type="entry name" value="Globin"/>
    <property type="match status" value="1"/>
</dbReference>
<dbReference type="Pfam" id="PF00175">
    <property type="entry name" value="NAD_binding_1"/>
    <property type="match status" value="1"/>
</dbReference>
<dbReference type="PRINTS" id="PR00410">
    <property type="entry name" value="PHEHYDRXLASE"/>
</dbReference>
<dbReference type="SUPFAM" id="SSF52343">
    <property type="entry name" value="Ferredoxin reductase-like, C-terminal NADP-linked domain"/>
    <property type="match status" value="1"/>
</dbReference>
<dbReference type="SUPFAM" id="SSF46458">
    <property type="entry name" value="Globin-like"/>
    <property type="match status" value="1"/>
</dbReference>
<dbReference type="SUPFAM" id="SSF63380">
    <property type="entry name" value="Riboflavin synthase domain-like"/>
    <property type="match status" value="1"/>
</dbReference>
<dbReference type="PROSITE" id="PS51384">
    <property type="entry name" value="FAD_FR"/>
    <property type="match status" value="1"/>
</dbReference>
<dbReference type="PROSITE" id="PS01033">
    <property type="entry name" value="GLOBIN"/>
    <property type="match status" value="1"/>
</dbReference>
<keyword id="KW-0216">Detoxification</keyword>
<keyword id="KW-0274">FAD</keyword>
<keyword id="KW-0285">Flavoprotein</keyword>
<keyword id="KW-0349">Heme</keyword>
<keyword id="KW-0408">Iron</keyword>
<keyword id="KW-0479">Metal-binding</keyword>
<keyword id="KW-0520">NAD</keyword>
<keyword id="KW-0521">NADP</keyword>
<keyword id="KW-0560">Oxidoreductase</keyword>
<keyword id="KW-0561">Oxygen transport</keyword>
<keyword id="KW-0813">Transport</keyword>
<proteinExistence type="inferred from homology"/>